<gene>
    <name evidence="1" type="primary">ureG</name>
    <name type="ordered locus">APJL_1645</name>
</gene>
<proteinExistence type="inferred from homology"/>
<keyword id="KW-0143">Chaperone</keyword>
<keyword id="KW-0963">Cytoplasm</keyword>
<keyword id="KW-0342">GTP-binding</keyword>
<keyword id="KW-0996">Nickel insertion</keyword>
<keyword id="KW-0547">Nucleotide-binding</keyword>
<feature type="chain" id="PRO_1000145162" description="Urease accessory protein UreG">
    <location>
        <begin position="1"/>
        <end position="211"/>
    </location>
</feature>
<feature type="binding site" evidence="1">
    <location>
        <begin position="11"/>
        <end position="18"/>
    </location>
    <ligand>
        <name>GTP</name>
        <dbReference type="ChEBI" id="CHEBI:37565"/>
    </ligand>
</feature>
<reference key="1">
    <citation type="journal article" date="2008" name="PLoS ONE">
        <title>Genome biology of Actinobacillus pleuropneumoniae JL03, an isolate of serotype 3 prevalent in China.</title>
        <authorList>
            <person name="Xu Z."/>
            <person name="Zhou Y."/>
            <person name="Li L."/>
            <person name="Zhou R."/>
            <person name="Xiao S."/>
            <person name="Wan Y."/>
            <person name="Zhang S."/>
            <person name="Wang K."/>
            <person name="Li W."/>
            <person name="Li L."/>
            <person name="Jin H."/>
            <person name="Kang M."/>
            <person name="Dalai B."/>
            <person name="Li T."/>
            <person name="Liu L."/>
            <person name="Cheng Y."/>
            <person name="Zhang L."/>
            <person name="Xu T."/>
            <person name="Zheng H."/>
            <person name="Pu S."/>
            <person name="Wang B."/>
            <person name="Gu W."/>
            <person name="Zhang X.L."/>
            <person name="Zhu G.-F."/>
            <person name="Wang S."/>
            <person name="Zhao G.-P."/>
            <person name="Chen H."/>
        </authorList>
    </citation>
    <scope>NUCLEOTIDE SEQUENCE [LARGE SCALE GENOMIC DNA]</scope>
    <source>
        <strain>JL03</strain>
    </source>
</reference>
<name>UREG_ACTPJ</name>
<organism>
    <name type="scientific">Actinobacillus pleuropneumoniae serotype 3 (strain JL03)</name>
    <dbReference type="NCBI Taxonomy" id="434271"/>
    <lineage>
        <taxon>Bacteria</taxon>
        <taxon>Pseudomonadati</taxon>
        <taxon>Pseudomonadota</taxon>
        <taxon>Gammaproteobacteria</taxon>
        <taxon>Pasteurellales</taxon>
        <taxon>Pasteurellaceae</taxon>
        <taxon>Actinobacillus</taxon>
    </lineage>
</organism>
<comment type="function">
    <text evidence="1">Facilitates the functional incorporation of the urease nickel metallocenter. This process requires GTP hydrolysis, probably effectuated by UreG.</text>
</comment>
<comment type="subunit">
    <text evidence="1">Homodimer. UreD, UreF and UreG form a complex that acts as a GTP-hydrolysis-dependent molecular chaperone, activating the urease apoprotein by helping to assemble the nickel containing metallocenter of UreC. The UreE protein probably delivers the nickel.</text>
</comment>
<comment type="subcellular location">
    <subcellularLocation>
        <location evidence="1">Cytoplasm</location>
    </subcellularLocation>
</comment>
<comment type="similarity">
    <text evidence="1">Belongs to the SIMIBI class G3E GTPase family. UreG subfamily.</text>
</comment>
<evidence type="ECO:0000255" key="1">
    <source>
        <dbReference type="HAMAP-Rule" id="MF_01389"/>
    </source>
</evidence>
<sequence length="211" mass="23156">MRKYIKIGVAGPVGAGKTALIERLTREIACKYSVAVITNDIYTQEDAEFLTKNSLLPPERIMGVETGGCPHTAIREDASMNLEAVDEMVARFPEVELIFIESGGDNLSATFSPDLADVTIFVIDVAQGEKIPRKGGPGITRSDLLVINKTDLAPFVGADLSVMERDARRMRNGQPFIFTNLMKNENLDGVIGWIEKYALLKNIEDPASLVR</sequence>
<accession>B0BRT8</accession>
<dbReference type="EMBL" id="CP000687">
    <property type="protein sequence ID" value="ABY70197.1"/>
    <property type="molecule type" value="Genomic_DNA"/>
</dbReference>
<dbReference type="RefSeq" id="WP_012263313.1">
    <property type="nucleotide sequence ID" value="NC_010278.1"/>
</dbReference>
<dbReference type="SMR" id="B0BRT8"/>
<dbReference type="KEGG" id="apj:APJL_1645"/>
<dbReference type="HOGENOM" id="CLU_072144_1_0_6"/>
<dbReference type="Proteomes" id="UP000008547">
    <property type="component" value="Chromosome"/>
</dbReference>
<dbReference type="GO" id="GO:0005737">
    <property type="term" value="C:cytoplasm"/>
    <property type="evidence" value="ECO:0007669"/>
    <property type="project" value="UniProtKB-SubCell"/>
</dbReference>
<dbReference type="GO" id="GO:0005525">
    <property type="term" value="F:GTP binding"/>
    <property type="evidence" value="ECO:0007669"/>
    <property type="project" value="UniProtKB-KW"/>
</dbReference>
<dbReference type="GO" id="GO:0003924">
    <property type="term" value="F:GTPase activity"/>
    <property type="evidence" value="ECO:0007669"/>
    <property type="project" value="InterPro"/>
</dbReference>
<dbReference type="GO" id="GO:0016151">
    <property type="term" value="F:nickel cation binding"/>
    <property type="evidence" value="ECO:0007669"/>
    <property type="project" value="UniProtKB-UniRule"/>
</dbReference>
<dbReference type="GO" id="GO:0043419">
    <property type="term" value="P:urea catabolic process"/>
    <property type="evidence" value="ECO:0007669"/>
    <property type="project" value="InterPro"/>
</dbReference>
<dbReference type="CDD" id="cd05540">
    <property type="entry name" value="UreG"/>
    <property type="match status" value="1"/>
</dbReference>
<dbReference type="FunFam" id="3.40.50.300:FF:000208">
    <property type="entry name" value="Urease accessory protein UreG"/>
    <property type="match status" value="1"/>
</dbReference>
<dbReference type="Gene3D" id="3.40.50.300">
    <property type="entry name" value="P-loop containing nucleotide triphosphate hydrolases"/>
    <property type="match status" value="1"/>
</dbReference>
<dbReference type="HAMAP" id="MF_01389">
    <property type="entry name" value="UreG"/>
    <property type="match status" value="1"/>
</dbReference>
<dbReference type="InterPro" id="IPR003495">
    <property type="entry name" value="CobW/HypB/UreG_nucleotide-bd"/>
</dbReference>
<dbReference type="InterPro" id="IPR027417">
    <property type="entry name" value="P-loop_NTPase"/>
</dbReference>
<dbReference type="InterPro" id="IPR004400">
    <property type="entry name" value="UreG"/>
</dbReference>
<dbReference type="NCBIfam" id="TIGR00101">
    <property type="entry name" value="ureG"/>
    <property type="match status" value="1"/>
</dbReference>
<dbReference type="PANTHER" id="PTHR31715">
    <property type="entry name" value="UREASE ACCESSORY PROTEIN G"/>
    <property type="match status" value="1"/>
</dbReference>
<dbReference type="PANTHER" id="PTHR31715:SF0">
    <property type="entry name" value="UREASE ACCESSORY PROTEIN G"/>
    <property type="match status" value="1"/>
</dbReference>
<dbReference type="Pfam" id="PF02492">
    <property type="entry name" value="cobW"/>
    <property type="match status" value="1"/>
</dbReference>
<dbReference type="PIRSF" id="PIRSF005624">
    <property type="entry name" value="Ni-bind_GTPase"/>
    <property type="match status" value="1"/>
</dbReference>
<dbReference type="SUPFAM" id="SSF52540">
    <property type="entry name" value="P-loop containing nucleoside triphosphate hydrolases"/>
    <property type="match status" value="1"/>
</dbReference>
<protein>
    <recommendedName>
        <fullName evidence="1">Urease accessory protein UreG</fullName>
    </recommendedName>
</protein>